<comment type="function">
    <text evidence="1">Component of the sulfite reductase complex that catalyzes the 6-electron reduction of sulfite to sulfide. This is one of several activities required for the biosynthesis of L-cysteine from sulfate.</text>
</comment>
<comment type="catalytic activity">
    <reaction evidence="1">
        <text>hydrogen sulfide + 3 NADP(+) + 3 H2O = sulfite + 3 NADPH + 4 H(+)</text>
        <dbReference type="Rhea" id="RHEA:13801"/>
        <dbReference type="ChEBI" id="CHEBI:15377"/>
        <dbReference type="ChEBI" id="CHEBI:15378"/>
        <dbReference type="ChEBI" id="CHEBI:17359"/>
        <dbReference type="ChEBI" id="CHEBI:29919"/>
        <dbReference type="ChEBI" id="CHEBI:57783"/>
        <dbReference type="ChEBI" id="CHEBI:58349"/>
        <dbReference type="EC" id="1.8.1.2"/>
    </reaction>
</comment>
<comment type="cofactor">
    <cofactor evidence="1">
        <name>siroheme</name>
        <dbReference type="ChEBI" id="CHEBI:60052"/>
    </cofactor>
    <text evidence="1">Binds 1 siroheme per subunit.</text>
</comment>
<comment type="cofactor">
    <cofactor evidence="1">
        <name>[4Fe-4S] cluster</name>
        <dbReference type="ChEBI" id="CHEBI:49883"/>
    </cofactor>
    <text evidence="1">Binds 1 [4Fe-4S] cluster per subunit.</text>
</comment>
<comment type="pathway">
    <text evidence="1">Sulfur metabolism; hydrogen sulfide biosynthesis; hydrogen sulfide from sulfite (NADPH route): step 1/1.</text>
</comment>
<comment type="subunit">
    <text evidence="1">Alpha(8)-beta(8). The alpha component is a flavoprotein, the beta component is a hemoprotein.</text>
</comment>
<comment type="similarity">
    <text evidence="1">Belongs to the nitrite and sulfite reductase 4Fe-4S domain family.</text>
</comment>
<accession>Q6LM59</accession>
<sequence>MTEQKLSDNERLKRESNFLRGTIADDLQDRITGGFTADNFQLIRFHGMYQQDDRDIRAERAKQKLEPLHNVMLRARMPGGIITPTQWLAIDKFAEESSLYGSIRLTTRQTFQFHGVLKPNIKLMHQTLNSIGIDSIATAGDVNRNVLCTTNPIESELHQEAYEWAKKISEHLLPKTRAYAEIWLDGEKVEGGDEEPILGSNYLPRKFKTTVVIPPQNDVDVHANDLNFIAIADNGKLVGFNVLVGGGLAMTHGDKTTYPRRADDFGFIPLVNTLEVAAAVVTTQRDWGNRSNRKNAKTKYTLDRVGVDVFKAEVEKRAGITFEASRPYEFTDRGDRIGWVEGIDGKHHLALFIENGRLLDTPGKPLKTGVAEIAKIHKGDFRMTANQNLIVAGVPAADKNKIEKIARDHGLIDDGVSEQRKNSMACVAFPTCPLAMAEAERFLPDFVTDVEGVLAKHGLAEDDNIILRVTGCANGCGRAMLAEIGLVGKAPGRYNVHLGGNRNGTRVPKMYRENITVPQIMDEIDQLVGRWANEREDGEDFGDFTVRTGIIEPVLVSKRDFYA</sequence>
<keyword id="KW-0004">4Fe-4S</keyword>
<keyword id="KW-0028">Amino-acid biosynthesis</keyword>
<keyword id="KW-0198">Cysteine biosynthesis</keyword>
<keyword id="KW-0349">Heme</keyword>
<keyword id="KW-0408">Iron</keyword>
<keyword id="KW-0411">Iron-sulfur</keyword>
<keyword id="KW-0479">Metal-binding</keyword>
<keyword id="KW-0521">NADP</keyword>
<keyword id="KW-0560">Oxidoreductase</keyword>
<keyword id="KW-1185">Reference proteome</keyword>
<evidence type="ECO:0000255" key="1">
    <source>
        <dbReference type="HAMAP-Rule" id="MF_01540"/>
    </source>
</evidence>
<protein>
    <recommendedName>
        <fullName evidence="1">Sulfite reductase [NADPH] hemoprotein beta-component</fullName>
        <shortName evidence="1">SiR-HP</shortName>
        <shortName evidence="1">SiRHP</shortName>
        <ecNumber evidence="1">1.8.1.2</ecNumber>
    </recommendedName>
</protein>
<name>CYSI_PHOPR</name>
<organism>
    <name type="scientific">Photobacterium profundum (strain SS9)</name>
    <dbReference type="NCBI Taxonomy" id="298386"/>
    <lineage>
        <taxon>Bacteria</taxon>
        <taxon>Pseudomonadati</taxon>
        <taxon>Pseudomonadota</taxon>
        <taxon>Gammaproteobacteria</taxon>
        <taxon>Vibrionales</taxon>
        <taxon>Vibrionaceae</taxon>
        <taxon>Photobacterium</taxon>
    </lineage>
</organism>
<gene>
    <name evidence="1" type="primary">cysI</name>
    <name type="ordered locus">PBPRA3320</name>
</gene>
<reference key="1">
    <citation type="journal article" date="2005" name="Science">
        <title>Life at depth: Photobacterium profundum genome sequence and expression analysis.</title>
        <authorList>
            <person name="Vezzi A."/>
            <person name="Campanaro S."/>
            <person name="D'Angelo M."/>
            <person name="Simonato F."/>
            <person name="Vitulo N."/>
            <person name="Lauro F.M."/>
            <person name="Cestaro A."/>
            <person name="Malacrida G."/>
            <person name="Simionati B."/>
            <person name="Cannata N."/>
            <person name="Romualdi C."/>
            <person name="Bartlett D.H."/>
            <person name="Valle G."/>
        </authorList>
    </citation>
    <scope>NUCLEOTIDE SEQUENCE [LARGE SCALE GENOMIC DNA]</scope>
    <source>
        <strain>ATCC BAA-1253 / SS9</strain>
    </source>
</reference>
<feature type="chain" id="PRO_0000199904" description="Sulfite reductase [NADPH] hemoprotein beta-component">
    <location>
        <begin position="1"/>
        <end position="563"/>
    </location>
</feature>
<feature type="binding site" evidence="1">
    <location>
        <position position="426"/>
    </location>
    <ligand>
        <name>[4Fe-4S] cluster</name>
        <dbReference type="ChEBI" id="CHEBI:49883"/>
    </ligand>
</feature>
<feature type="binding site" evidence="1">
    <location>
        <position position="432"/>
    </location>
    <ligand>
        <name>[4Fe-4S] cluster</name>
        <dbReference type="ChEBI" id="CHEBI:49883"/>
    </ligand>
</feature>
<feature type="binding site" evidence="1">
    <location>
        <position position="472"/>
    </location>
    <ligand>
        <name>[4Fe-4S] cluster</name>
        <dbReference type="ChEBI" id="CHEBI:49883"/>
    </ligand>
</feature>
<feature type="binding site" evidence="1">
    <location>
        <position position="476"/>
    </location>
    <ligand>
        <name>[4Fe-4S] cluster</name>
        <dbReference type="ChEBI" id="CHEBI:49883"/>
    </ligand>
</feature>
<feature type="binding site" description="axial binding residue" evidence="1">
    <location>
        <position position="476"/>
    </location>
    <ligand>
        <name>siroheme</name>
        <dbReference type="ChEBI" id="CHEBI:60052"/>
    </ligand>
    <ligandPart>
        <name>Fe</name>
        <dbReference type="ChEBI" id="CHEBI:18248"/>
    </ligandPart>
</feature>
<dbReference type="EC" id="1.8.1.2" evidence="1"/>
<dbReference type="EMBL" id="CR378673">
    <property type="protein sequence ID" value="CAG21618.1"/>
    <property type="molecule type" value="Genomic_DNA"/>
</dbReference>
<dbReference type="RefSeq" id="WP_011219867.1">
    <property type="nucleotide sequence ID" value="NC_006370.1"/>
</dbReference>
<dbReference type="SMR" id="Q6LM59"/>
<dbReference type="STRING" id="298386.PBPRA3320"/>
<dbReference type="KEGG" id="ppr:PBPRA3320"/>
<dbReference type="eggNOG" id="COG0155">
    <property type="taxonomic scope" value="Bacteria"/>
</dbReference>
<dbReference type="HOGENOM" id="CLU_001975_3_2_6"/>
<dbReference type="UniPathway" id="UPA00140">
    <property type="reaction ID" value="UER00207"/>
</dbReference>
<dbReference type="Proteomes" id="UP000000593">
    <property type="component" value="Chromosome 1"/>
</dbReference>
<dbReference type="GO" id="GO:0009337">
    <property type="term" value="C:sulfite reductase complex (NADPH)"/>
    <property type="evidence" value="ECO:0007669"/>
    <property type="project" value="InterPro"/>
</dbReference>
<dbReference type="GO" id="GO:0051539">
    <property type="term" value="F:4 iron, 4 sulfur cluster binding"/>
    <property type="evidence" value="ECO:0007669"/>
    <property type="project" value="UniProtKB-KW"/>
</dbReference>
<dbReference type="GO" id="GO:0020037">
    <property type="term" value="F:heme binding"/>
    <property type="evidence" value="ECO:0007669"/>
    <property type="project" value="InterPro"/>
</dbReference>
<dbReference type="GO" id="GO:0046872">
    <property type="term" value="F:metal ion binding"/>
    <property type="evidence" value="ECO:0007669"/>
    <property type="project" value="UniProtKB-KW"/>
</dbReference>
<dbReference type="GO" id="GO:0050661">
    <property type="term" value="F:NADP binding"/>
    <property type="evidence" value="ECO:0007669"/>
    <property type="project" value="InterPro"/>
</dbReference>
<dbReference type="GO" id="GO:0050311">
    <property type="term" value="F:sulfite reductase (ferredoxin) activity"/>
    <property type="evidence" value="ECO:0007669"/>
    <property type="project" value="TreeGrafter"/>
</dbReference>
<dbReference type="GO" id="GO:0004783">
    <property type="term" value="F:sulfite reductase (NADPH) activity"/>
    <property type="evidence" value="ECO:0007669"/>
    <property type="project" value="UniProtKB-UniRule"/>
</dbReference>
<dbReference type="GO" id="GO:0019344">
    <property type="term" value="P:cysteine biosynthetic process"/>
    <property type="evidence" value="ECO:0007669"/>
    <property type="project" value="UniProtKB-KW"/>
</dbReference>
<dbReference type="GO" id="GO:0070814">
    <property type="term" value="P:hydrogen sulfide biosynthetic process"/>
    <property type="evidence" value="ECO:0007669"/>
    <property type="project" value="UniProtKB-UniRule"/>
</dbReference>
<dbReference type="GO" id="GO:0000103">
    <property type="term" value="P:sulfate assimilation"/>
    <property type="evidence" value="ECO:0007669"/>
    <property type="project" value="UniProtKB-UniRule"/>
</dbReference>
<dbReference type="FunFam" id="3.30.413.10:FF:000003">
    <property type="entry name" value="Sulfite reductase [NADPH] hemoprotein beta-component"/>
    <property type="match status" value="1"/>
</dbReference>
<dbReference type="FunFam" id="3.30.413.10:FF:000004">
    <property type="entry name" value="Sulfite reductase [NADPH] hemoprotein beta-component"/>
    <property type="match status" value="1"/>
</dbReference>
<dbReference type="Gene3D" id="3.30.413.10">
    <property type="entry name" value="Sulfite Reductase Hemoprotein, domain 1"/>
    <property type="match status" value="2"/>
</dbReference>
<dbReference type="HAMAP" id="MF_01540">
    <property type="entry name" value="CysI"/>
    <property type="match status" value="1"/>
</dbReference>
<dbReference type="InterPro" id="IPR011786">
    <property type="entry name" value="CysI"/>
</dbReference>
<dbReference type="InterPro" id="IPR005117">
    <property type="entry name" value="NiRdtase/SiRdtase_haem-b_fer"/>
</dbReference>
<dbReference type="InterPro" id="IPR036136">
    <property type="entry name" value="Nit/Sulf_reduc_fer-like_dom_sf"/>
</dbReference>
<dbReference type="InterPro" id="IPR006067">
    <property type="entry name" value="NO2/SO3_Rdtase_4Fe4S_dom"/>
</dbReference>
<dbReference type="InterPro" id="IPR045169">
    <property type="entry name" value="NO2/SO3_Rdtase_4Fe4S_prot"/>
</dbReference>
<dbReference type="InterPro" id="IPR045854">
    <property type="entry name" value="NO2/SO3_Rdtase_4Fe4S_sf"/>
</dbReference>
<dbReference type="InterPro" id="IPR006066">
    <property type="entry name" value="NO2/SO3_Rdtase_FeS/sirohaem_BS"/>
</dbReference>
<dbReference type="NCBIfam" id="TIGR02041">
    <property type="entry name" value="CysI"/>
    <property type="match status" value="1"/>
</dbReference>
<dbReference type="NCBIfam" id="NF010029">
    <property type="entry name" value="PRK13504.1"/>
    <property type="match status" value="1"/>
</dbReference>
<dbReference type="PANTHER" id="PTHR11493:SF47">
    <property type="entry name" value="SULFITE REDUCTASE [NADPH] SUBUNIT BETA"/>
    <property type="match status" value="1"/>
</dbReference>
<dbReference type="PANTHER" id="PTHR11493">
    <property type="entry name" value="SULFITE REDUCTASE [NADPH] SUBUNIT BETA-RELATED"/>
    <property type="match status" value="1"/>
</dbReference>
<dbReference type="Pfam" id="PF01077">
    <property type="entry name" value="NIR_SIR"/>
    <property type="match status" value="1"/>
</dbReference>
<dbReference type="Pfam" id="PF03460">
    <property type="entry name" value="NIR_SIR_ferr"/>
    <property type="match status" value="2"/>
</dbReference>
<dbReference type="PRINTS" id="PR00397">
    <property type="entry name" value="SIROHAEM"/>
</dbReference>
<dbReference type="SUPFAM" id="SSF56014">
    <property type="entry name" value="Nitrite and sulphite reductase 4Fe-4S domain-like"/>
    <property type="match status" value="2"/>
</dbReference>
<dbReference type="SUPFAM" id="SSF55124">
    <property type="entry name" value="Nitrite/Sulfite reductase N-terminal domain-like"/>
    <property type="match status" value="2"/>
</dbReference>
<dbReference type="PROSITE" id="PS00365">
    <property type="entry name" value="NIR_SIR"/>
    <property type="match status" value="1"/>
</dbReference>
<proteinExistence type="inferred from homology"/>